<reference key="1">
    <citation type="journal article" date="2016" name="Genome Announc.">
        <title>Complete genome sequence of Alkaliphilus metalliredigens strain QYMF, an alkaliphilic and metal-reducing bacterium isolated from borax-contaminated leachate ponds.</title>
        <authorList>
            <person name="Hwang C."/>
            <person name="Copeland A."/>
            <person name="Lucas S."/>
            <person name="Lapidus A."/>
            <person name="Barry K."/>
            <person name="Detter J.C."/>
            <person name="Glavina Del Rio T."/>
            <person name="Hammon N."/>
            <person name="Israni S."/>
            <person name="Dalin E."/>
            <person name="Tice H."/>
            <person name="Pitluck S."/>
            <person name="Chertkov O."/>
            <person name="Brettin T."/>
            <person name="Bruce D."/>
            <person name="Han C."/>
            <person name="Schmutz J."/>
            <person name="Larimer F."/>
            <person name="Land M.L."/>
            <person name="Hauser L."/>
            <person name="Kyrpides N."/>
            <person name="Mikhailova N."/>
            <person name="Ye Q."/>
            <person name="Zhou J."/>
            <person name="Richardson P."/>
            <person name="Fields M.W."/>
        </authorList>
    </citation>
    <scope>NUCLEOTIDE SEQUENCE [LARGE SCALE GENOMIC DNA]</scope>
    <source>
        <strain>QYMF</strain>
    </source>
</reference>
<proteinExistence type="inferred from homology"/>
<gene>
    <name evidence="1" type="primary">guaA</name>
    <name type="ordered locus">Amet_0910</name>
</gene>
<dbReference type="EC" id="6.3.5.2" evidence="1"/>
<dbReference type="EMBL" id="CP000724">
    <property type="protein sequence ID" value="ABR47131.1"/>
    <property type="molecule type" value="Genomic_DNA"/>
</dbReference>
<dbReference type="RefSeq" id="WP_012062173.1">
    <property type="nucleotide sequence ID" value="NC_009633.1"/>
</dbReference>
<dbReference type="SMR" id="A6TLR3"/>
<dbReference type="STRING" id="293826.Amet_0910"/>
<dbReference type="MEROPS" id="C26.957"/>
<dbReference type="KEGG" id="amt:Amet_0910"/>
<dbReference type="eggNOG" id="COG0518">
    <property type="taxonomic scope" value="Bacteria"/>
</dbReference>
<dbReference type="eggNOG" id="COG0519">
    <property type="taxonomic scope" value="Bacteria"/>
</dbReference>
<dbReference type="HOGENOM" id="CLU_014340_0_5_9"/>
<dbReference type="OrthoDB" id="9802219at2"/>
<dbReference type="UniPathway" id="UPA00189">
    <property type="reaction ID" value="UER00296"/>
</dbReference>
<dbReference type="Proteomes" id="UP000001572">
    <property type="component" value="Chromosome"/>
</dbReference>
<dbReference type="GO" id="GO:0005829">
    <property type="term" value="C:cytosol"/>
    <property type="evidence" value="ECO:0007669"/>
    <property type="project" value="TreeGrafter"/>
</dbReference>
<dbReference type="GO" id="GO:0005524">
    <property type="term" value="F:ATP binding"/>
    <property type="evidence" value="ECO:0007669"/>
    <property type="project" value="UniProtKB-UniRule"/>
</dbReference>
<dbReference type="GO" id="GO:0003921">
    <property type="term" value="F:GMP synthase activity"/>
    <property type="evidence" value="ECO:0007669"/>
    <property type="project" value="InterPro"/>
</dbReference>
<dbReference type="CDD" id="cd01742">
    <property type="entry name" value="GATase1_GMP_Synthase"/>
    <property type="match status" value="1"/>
</dbReference>
<dbReference type="CDD" id="cd01997">
    <property type="entry name" value="GMP_synthase_C"/>
    <property type="match status" value="1"/>
</dbReference>
<dbReference type="FunFam" id="3.30.300.10:FF:000002">
    <property type="entry name" value="GMP synthase [glutamine-hydrolyzing]"/>
    <property type="match status" value="1"/>
</dbReference>
<dbReference type="FunFam" id="3.40.50.620:FF:000001">
    <property type="entry name" value="GMP synthase [glutamine-hydrolyzing]"/>
    <property type="match status" value="1"/>
</dbReference>
<dbReference type="FunFam" id="3.40.50.880:FF:000001">
    <property type="entry name" value="GMP synthase [glutamine-hydrolyzing]"/>
    <property type="match status" value="1"/>
</dbReference>
<dbReference type="Gene3D" id="3.30.300.10">
    <property type="match status" value="1"/>
</dbReference>
<dbReference type="Gene3D" id="3.40.50.880">
    <property type="match status" value="1"/>
</dbReference>
<dbReference type="Gene3D" id="3.40.50.620">
    <property type="entry name" value="HUPs"/>
    <property type="match status" value="1"/>
</dbReference>
<dbReference type="HAMAP" id="MF_00344">
    <property type="entry name" value="GMP_synthase"/>
    <property type="match status" value="1"/>
</dbReference>
<dbReference type="InterPro" id="IPR029062">
    <property type="entry name" value="Class_I_gatase-like"/>
</dbReference>
<dbReference type="InterPro" id="IPR017926">
    <property type="entry name" value="GATASE"/>
</dbReference>
<dbReference type="InterPro" id="IPR001674">
    <property type="entry name" value="GMP_synth_C"/>
</dbReference>
<dbReference type="InterPro" id="IPR004739">
    <property type="entry name" value="GMP_synth_GATase"/>
</dbReference>
<dbReference type="InterPro" id="IPR022955">
    <property type="entry name" value="GMP_synthase"/>
</dbReference>
<dbReference type="InterPro" id="IPR025777">
    <property type="entry name" value="GMPS_ATP_PPase_dom"/>
</dbReference>
<dbReference type="InterPro" id="IPR014729">
    <property type="entry name" value="Rossmann-like_a/b/a_fold"/>
</dbReference>
<dbReference type="NCBIfam" id="TIGR00884">
    <property type="entry name" value="guaA_Cterm"/>
    <property type="match status" value="1"/>
</dbReference>
<dbReference type="NCBIfam" id="TIGR00888">
    <property type="entry name" value="guaA_Nterm"/>
    <property type="match status" value="1"/>
</dbReference>
<dbReference type="NCBIfam" id="NF000848">
    <property type="entry name" value="PRK00074.1"/>
    <property type="match status" value="1"/>
</dbReference>
<dbReference type="PANTHER" id="PTHR11922:SF2">
    <property type="entry name" value="GMP SYNTHASE [GLUTAMINE-HYDROLYZING]"/>
    <property type="match status" value="1"/>
</dbReference>
<dbReference type="PANTHER" id="PTHR11922">
    <property type="entry name" value="GMP SYNTHASE-RELATED"/>
    <property type="match status" value="1"/>
</dbReference>
<dbReference type="Pfam" id="PF00117">
    <property type="entry name" value="GATase"/>
    <property type="match status" value="1"/>
</dbReference>
<dbReference type="Pfam" id="PF00958">
    <property type="entry name" value="GMP_synt_C"/>
    <property type="match status" value="1"/>
</dbReference>
<dbReference type="Pfam" id="PF03054">
    <property type="entry name" value="tRNA_Me_trans"/>
    <property type="match status" value="1"/>
</dbReference>
<dbReference type="PRINTS" id="PR00097">
    <property type="entry name" value="ANTSNTHASEII"/>
</dbReference>
<dbReference type="PRINTS" id="PR00099">
    <property type="entry name" value="CPSGATASE"/>
</dbReference>
<dbReference type="PRINTS" id="PR00096">
    <property type="entry name" value="GATASE"/>
</dbReference>
<dbReference type="SUPFAM" id="SSF52402">
    <property type="entry name" value="Adenine nucleotide alpha hydrolases-like"/>
    <property type="match status" value="1"/>
</dbReference>
<dbReference type="SUPFAM" id="SSF52317">
    <property type="entry name" value="Class I glutamine amidotransferase-like"/>
    <property type="match status" value="1"/>
</dbReference>
<dbReference type="PROSITE" id="PS51273">
    <property type="entry name" value="GATASE_TYPE_1"/>
    <property type="match status" value="1"/>
</dbReference>
<dbReference type="PROSITE" id="PS51553">
    <property type="entry name" value="GMPS_ATP_PPASE"/>
    <property type="match status" value="1"/>
</dbReference>
<feature type="chain" id="PRO_1000205288" description="GMP synthase [glutamine-hydrolyzing]">
    <location>
        <begin position="1"/>
        <end position="510"/>
    </location>
</feature>
<feature type="domain" description="Glutamine amidotransferase type-1" evidence="1">
    <location>
        <begin position="5"/>
        <end position="195"/>
    </location>
</feature>
<feature type="domain" description="GMPS ATP-PPase" evidence="1">
    <location>
        <begin position="196"/>
        <end position="385"/>
    </location>
</feature>
<feature type="active site" description="Nucleophile" evidence="1">
    <location>
        <position position="82"/>
    </location>
</feature>
<feature type="active site" evidence="1">
    <location>
        <position position="169"/>
    </location>
</feature>
<feature type="active site" evidence="1">
    <location>
        <position position="171"/>
    </location>
</feature>
<feature type="binding site" evidence="1">
    <location>
        <begin position="223"/>
        <end position="229"/>
    </location>
    <ligand>
        <name>ATP</name>
        <dbReference type="ChEBI" id="CHEBI:30616"/>
    </ligand>
</feature>
<protein>
    <recommendedName>
        <fullName evidence="1">GMP synthase [glutamine-hydrolyzing]</fullName>
        <ecNumber evidence="1">6.3.5.2</ecNumber>
    </recommendedName>
    <alternativeName>
        <fullName evidence="1">GMP synthetase</fullName>
    </alternativeName>
    <alternativeName>
        <fullName evidence="1">Glutamine amidotransferase</fullName>
    </alternativeName>
</protein>
<name>GUAA_ALKMQ</name>
<keyword id="KW-0067">ATP-binding</keyword>
<keyword id="KW-0315">Glutamine amidotransferase</keyword>
<keyword id="KW-0332">GMP biosynthesis</keyword>
<keyword id="KW-0436">Ligase</keyword>
<keyword id="KW-0547">Nucleotide-binding</keyword>
<keyword id="KW-0658">Purine biosynthesis</keyword>
<keyword id="KW-1185">Reference proteome</keyword>
<sequence length="510" mass="57430">MKQELVLILDFGGQYNQLIARRVREHNIYCEVVPYKITAEEIKLKNPKGLILTGGPSSVYGESTPRCEEEIFQLDIPILGICYGGQLMAHTLGGKVNRAKNREYGKTALQVDGNSKLFKEVAQDSICWMSHTDFIETAPAGFKITGTTADCPVAAMENQEKALYAVQFHPEVEHTEKGKEILKNFLYEVCHCQGDWTMENYIEKEIEAIRNLVGDRKVLCALSGGVDSSVAAVLVHQAIGDNLTCVFVDHGLLRKDEGDWVEDIFRNQFEMNFIRVNAEERFLGKLKGVTDPELKRKAIGELFIRVFEEEAQKIGDFDFLVQGTLYPDIIESGTETAAVIKSHHNVGGLPEDMKFQLIEPFKFLFKDEVRIAGLELGVPEEIVWRQPFPGPGLAVRVLGEITEEKLHIVREADAIVRDEIIKAGLHRQIWQYFAVLPNIMSVGVMGDERTYAHTIGIRAITSSDAMTADWARIPFEVLENMSRRIVNEVEGANRIVYDITSKPPSTVEWE</sequence>
<organism>
    <name type="scientific">Alkaliphilus metalliredigens (strain QYMF)</name>
    <dbReference type="NCBI Taxonomy" id="293826"/>
    <lineage>
        <taxon>Bacteria</taxon>
        <taxon>Bacillati</taxon>
        <taxon>Bacillota</taxon>
        <taxon>Clostridia</taxon>
        <taxon>Peptostreptococcales</taxon>
        <taxon>Natronincolaceae</taxon>
        <taxon>Alkaliphilus</taxon>
    </lineage>
</organism>
<accession>A6TLR3</accession>
<evidence type="ECO:0000255" key="1">
    <source>
        <dbReference type="HAMAP-Rule" id="MF_00344"/>
    </source>
</evidence>
<comment type="function">
    <text evidence="1">Catalyzes the synthesis of GMP from XMP.</text>
</comment>
<comment type="catalytic activity">
    <reaction evidence="1">
        <text>XMP + L-glutamine + ATP + H2O = GMP + L-glutamate + AMP + diphosphate + 2 H(+)</text>
        <dbReference type="Rhea" id="RHEA:11680"/>
        <dbReference type="ChEBI" id="CHEBI:15377"/>
        <dbReference type="ChEBI" id="CHEBI:15378"/>
        <dbReference type="ChEBI" id="CHEBI:29985"/>
        <dbReference type="ChEBI" id="CHEBI:30616"/>
        <dbReference type="ChEBI" id="CHEBI:33019"/>
        <dbReference type="ChEBI" id="CHEBI:57464"/>
        <dbReference type="ChEBI" id="CHEBI:58115"/>
        <dbReference type="ChEBI" id="CHEBI:58359"/>
        <dbReference type="ChEBI" id="CHEBI:456215"/>
        <dbReference type="EC" id="6.3.5.2"/>
    </reaction>
</comment>
<comment type="pathway">
    <text evidence="1">Purine metabolism; GMP biosynthesis; GMP from XMP (L-Gln route): step 1/1.</text>
</comment>
<comment type="subunit">
    <text evidence="1">Homodimer.</text>
</comment>